<organism>
    <name type="scientific">Geobacter sulfurreducens (strain ATCC 51573 / DSM 12127 / PCA)</name>
    <dbReference type="NCBI Taxonomy" id="243231"/>
    <lineage>
        <taxon>Bacteria</taxon>
        <taxon>Pseudomonadati</taxon>
        <taxon>Thermodesulfobacteriota</taxon>
        <taxon>Desulfuromonadia</taxon>
        <taxon>Geobacterales</taxon>
        <taxon>Geobacteraceae</taxon>
        <taxon>Geobacter</taxon>
    </lineage>
</organism>
<gene>
    <name evidence="1" type="primary">rpmC</name>
    <name type="ordered locus">GSU2849</name>
</gene>
<feature type="chain" id="PRO_0000130394" description="Large ribosomal subunit protein uL29">
    <location>
        <begin position="1"/>
        <end position="62"/>
    </location>
</feature>
<reference key="1">
    <citation type="journal article" date="2003" name="Science">
        <title>Genome of Geobacter sulfurreducens: metal reduction in subsurface environments.</title>
        <authorList>
            <person name="Methe B.A."/>
            <person name="Nelson K.E."/>
            <person name="Eisen J.A."/>
            <person name="Paulsen I.T."/>
            <person name="Nelson W.C."/>
            <person name="Heidelberg J.F."/>
            <person name="Wu D."/>
            <person name="Wu M."/>
            <person name="Ward N.L."/>
            <person name="Beanan M.J."/>
            <person name="Dodson R.J."/>
            <person name="Madupu R."/>
            <person name="Brinkac L.M."/>
            <person name="Daugherty S.C."/>
            <person name="DeBoy R.T."/>
            <person name="Durkin A.S."/>
            <person name="Gwinn M.L."/>
            <person name="Kolonay J.F."/>
            <person name="Sullivan S.A."/>
            <person name="Haft D.H."/>
            <person name="Selengut J."/>
            <person name="Davidsen T.M."/>
            <person name="Zafar N."/>
            <person name="White O."/>
            <person name="Tran B."/>
            <person name="Romero C."/>
            <person name="Forberger H.A."/>
            <person name="Weidman J.F."/>
            <person name="Khouri H.M."/>
            <person name="Feldblyum T.V."/>
            <person name="Utterback T.R."/>
            <person name="Van Aken S.E."/>
            <person name="Lovley D.R."/>
            <person name="Fraser C.M."/>
        </authorList>
    </citation>
    <scope>NUCLEOTIDE SEQUENCE [LARGE SCALE GENOMIC DNA]</scope>
    <source>
        <strain>ATCC 51573 / DSM 12127 / PCA</strain>
    </source>
</reference>
<comment type="similarity">
    <text evidence="1">Belongs to the universal ribosomal protein uL29 family.</text>
</comment>
<accession>Q748Z6</accession>
<keyword id="KW-1185">Reference proteome</keyword>
<keyword id="KW-0687">Ribonucleoprotein</keyword>
<keyword id="KW-0689">Ribosomal protein</keyword>
<dbReference type="EMBL" id="AE017180">
    <property type="protein sequence ID" value="AAR36242.2"/>
    <property type="molecule type" value="Genomic_DNA"/>
</dbReference>
<dbReference type="RefSeq" id="NP_953892.2">
    <property type="nucleotide sequence ID" value="NC_002939.5"/>
</dbReference>
<dbReference type="RefSeq" id="WP_010943478.1">
    <property type="nucleotide sequence ID" value="NC_002939.5"/>
</dbReference>
<dbReference type="SMR" id="Q748Z6"/>
<dbReference type="FunCoup" id="Q748Z6">
    <property type="interactions" value="476"/>
</dbReference>
<dbReference type="STRING" id="243231.GSU2849"/>
<dbReference type="EnsemblBacteria" id="AAR36242">
    <property type="protein sequence ID" value="AAR36242"/>
    <property type="gene ID" value="GSU2849"/>
</dbReference>
<dbReference type="KEGG" id="gsu:GSU2849"/>
<dbReference type="PATRIC" id="fig|243231.5.peg.2875"/>
<dbReference type="eggNOG" id="COG0255">
    <property type="taxonomic scope" value="Bacteria"/>
</dbReference>
<dbReference type="HOGENOM" id="CLU_158491_5_2_7"/>
<dbReference type="InParanoid" id="Q748Z6"/>
<dbReference type="OrthoDB" id="9815192at2"/>
<dbReference type="Proteomes" id="UP000000577">
    <property type="component" value="Chromosome"/>
</dbReference>
<dbReference type="GO" id="GO:0022625">
    <property type="term" value="C:cytosolic large ribosomal subunit"/>
    <property type="evidence" value="ECO:0000318"/>
    <property type="project" value="GO_Central"/>
</dbReference>
<dbReference type="GO" id="GO:0003735">
    <property type="term" value="F:structural constituent of ribosome"/>
    <property type="evidence" value="ECO:0007669"/>
    <property type="project" value="InterPro"/>
</dbReference>
<dbReference type="GO" id="GO:0006412">
    <property type="term" value="P:translation"/>
    <property type="evidence" value="ECO:0007669"/>
    <property type="project" value="UniProtKB-UniRule"/>
</dbReference>
<dbReference type="CDD" id="cd00427">
    <property type="entry name" value="Ribosomal_L29_HIP"/>
    <property type="match status" value="1"/>
</dbReference>
<dbReference type="FunFam" id="1.10.287.310:FF:000001">
    <property type="entry name" value="50S ribosomal protein L29"/>
    <property type="match status" value="1"/>
</dbReference>
<dbReference type="Gene3D" id="1.10.287.310">
    <property type="match status" value="1"/>
</dbReference>
<dbReference type="HAMAP" id="MF_00374">
    <property type="entry name" value="Ribosomal_uL29"/>
    <property type="match status" value="1"/>
</dbReference>
<dbReference type="InterPro" id="IPR050063">
    <property type="entry name" value="Ribosomal_protein_uL29"/>
</dbReference>
<dbReference type="InterPro" id="IPR001854">
    <property type="entry name" value="Ribosomal_uL29"/>
</dbReference>
<dbReference type="InterPro" id="IPR018254">
    <property type="entry name" value="Ribosomal_uL29_CS"/>
</dbReference>
<dbReference type="InterPro" id="IPR036049">
    <property type="entry name" value="Ribosomal_uL29_sf"/>
</dbReference>
<dbReference type="NCBIfam" id="TIGR00012">
    <property type="entry name" value="L29"/>
    <property type="match status" value="1"/>
</dbReference>
<dbReference type="PANTHER" id="PTHR10916">
    <property type="entry name" value="60S RIBOSOMAL PROTEIN L35/50S RIBOSOMAL PROTEIN L29"/>
    <property type="match status" value="1"/>
</dbReference>
<dbReference type="PANTHER" id="PTHR10916:SF0">
    <property type="entry name" value="LARGE RIBOSOMAL SUBUNIT PROTEIN UL29C"/>
    <property type="match status" value="1"/>
</dbReference>
<dbReference type="Pfam" id="PF00831">
    <property type="entry name" value="Ribosomal_L29"/>
    <property type="match status" value="1"/>
</dbReference>
<dbReference type="SUPFAM" id="SSF46561">
    <property type="entry name" value="Ribosomal protein L29 (L29p)"/>
    <property type="match status" value="1"/>
</dbReference>
<dbReference type="PROSITE" id="PS00579">
    <property type="entry name" value="RIBOSOMAL_L29"/>
    <property type="match status" value="1"/>
</dbReference>
<sequence>MKASELKNKSMEELTAKAAELSQELFNLRFQLHTGRLENTAKISSVKKDIARIKTILSEKRG</sequence>
<name>RL29_GEOSL</name>
<protein>
    <recommendedName>
        <fullName evidence="1">Large ribosomal subunit protein uL29</fullName>
    </recommendedName>
    <alternativeName>
        <fullName evidence="2">50S ribosomal protein L29</fullName>
    </alternativeName>
</protein>
<proteinExistence type="inferred from homology"/>
<evidence type="ECO:0000255" key="1">
    <source>
        <dbReference type="HAMAP-Rule" id="MF_00374"/>
    </source>
</evidence>
<evidence type="ECO:0000305" key="2"/>